<name>MTHSD_MOUSE</name>
<gene>
    <name type="primary">Mthfsd</name>
</gene>
<organism>
    <name type="scientific">Mus musculus</name>
    <name type="common">Mouse</name>
    <dbReference type="NCBI Taxonomy" id="10090"/>
    <lineage>
        <taxon>Eukaryota</taxon>
        <taxon>Metazoa</taxon>
        <taxon>Chordata</taxon>
        <taxon>Craniata</taxon>
        <taxon>Vertebrata</taxon>
        <taxon>Euteleostomi</taxon>
        <taxon>Mammalia</taxon>
        <taxon>Eutheria</taxon>
        <taxon>Euarchontoglires</taxon>
        <taxon>Glires</taxon>
        <taxon>Rodentia</taxon>
        <taxon>Myomorpha</taxon>
        <taxon>Muroidea</taxon>
        <taxon>Muridae</taxon>
        <taxon>Murinae</taxon>
        <taxon>Mus</taxon>
        <taxon>Mus</taxon>
    </lineage>
</organism>
<proteinExistence type="evidence at transcript level"/>
<dbReference type="EMBL" id="AK083317">
    <property type="protein sequence ID" value="BAC38863.1"/>
    <property type="molecule type" value="mRNA"/>
</dbReference>
<dbReference type="EMBL" id="AK141278">
    <property type="protein sequence ID" value="BAE24631.1"/>
    <property type="molecule type" value="mRNA"/>
</dbReference>
<dbReference type="EMBL" id="BC052066">
    <property type="protein sequence ID" value="AAH52066.1"/>
    <property type="molecule type" value="mRNA"/>
</dbReference>
<dbReference type="CCDS" id="CCDS22723.1">
    <molecule id="Q3URQ7-2"/>
</dbReference>
<dbReference type="CCDS" id="CCDS52691.1">
    <molecule id="Q3URQ7-1"/>
</dbReference>
<dbReference type="RefSeq" id="NP_001159954.1">
    <molecule id="Q3URQ7-1"/>
    <property type="nucleotide sequence ID" value="NM_001166482.2"/>
</dbReference>
<dbReference type="RefSeq" id="NP_001359313.1">
    <molecule id="Q3URQ7-1"/>
    <property type="nucleotide sequence ID" value="NM_001372384.1"/>
</dbReference>
<dbReference type="RefSeq" id="NP_001359314.1">
    <molecule id="Q3URQ7-2"/>
    <property type="nucleotide sequence ID" value="NM_001372385.1"/>
</dbReference>
<dbReference type="RefSeq" id="NP_766349.1">
    <molecule id="Q3URQ7-2"/>
    <property type="nucleotide sequence ID" value="NM_172761.4"/>
</dbReference>
<dbReference type="RefSeq" id="XP_006531004.1">
    <property type="nucleotide sequence ID" value="XM_006530941.2"/>
</dbReference>
<dbReference type="SMR" id="Q3URQ7"/>
<dbReference type="BioGRID" id="231582">
    <property type="interactions" value="1"/>
</dbReference>
<dbReference type="FunCoup" id="Q3URQ7">
    <property type="interactions" value="2017"/>
</dbReference>
<dbReference type="STRING" id="10090.ENSMUSP00000112116"/>
<dbReference type="iPTMnet" id="Q3URQ7"/>
<dbReference type="PhosphoSitePlus" id="Q3URQ7"/>
<dbReference type="PaxDb" id="10090-ENSMUSP00000112116"/>
<dbReference type="ProteomicsDB" id="291364">
    <molecule id="Q3URQ7-1"/>
</dbReference>
<dbReference type="ProteomicsDB" id="291365">
    <molecule id="Q3URQ7-2"/>
</dbReference>
<dbReference type="ProteomicsDB" id="291366">
    <molecule id="Q3URQ7-3"/>
</dbReference>
<dbReference type="Pumba" id="Q3URQ7"/>
<dbReference type="Antibodypedia" id="30664">
    <property type="antibodies" value="115 antibodies from 20 providers"/>
</dbReference>
<dbReference type="DNASU" id="234814"/>
<dbReference type="Ensembl" id="ENSMUST00000047282.12">
    <molecule id="Q3URQ7-2"/>
    <property type="protein sequence ID" value="ENSMUSP00000044172.6"/>
    <property type="gene ID" value="ENSMUSG00000031816.16"/>
</dbReference>
<dbReference type="Ensembl" id="ENSMUST00000116415.9">
    <molecule id="Q3URQ7-1"/>
    <property type="protein sequence ID" value="ENSMUSP00000112116.3"/>
    <property type="gene ID" value="ENSMUSG00000031816.16"/>
</dbReference>
<dbReference type="GeneID" id="234814"/>
<dbReference type="KEGG" id="mmu:234814"/>
<dbReference type="UCSC" id="uc009nro.1">
    <molecule id="Q3URQ7-1"/>
    <property type="organism name" value="mouse"/>
</dbReference>
<dbReference type="AGR" id="MGI:2679252"/>
<dbReference type="CTD" id="64779"/>
<dbReference type="MGI" id="MGI:2679252">
    <property type="gene designation" value="Mthfsd"/>
</dbReference>
<dbReference type="VEuPathDB" id="HostDB:ENSMUSG00000031816"/>
<dbReference type="eggNOG" id="KOG4410">
    <property type="taxonomic scope" value="Eukaryota"/>
</dbReference>
<dbReference type="GeneTree" id="ENSGT00390000011730"/>
<dbReference type="HOGENOM" id="CLU_031500_3_0_1"/>
<dbReference type="InParanoid" id="Q3URQ7"/>
<dbReference type="OMA" id="VIRTECK"/>
<dbReference type="OrthoDB" id="433414at2759"/>
<dbReference type="PhylomeDB" id="Q3URQ7"/>
<dbReference type="TreeFam" id="TF324742"/>
<dbReference type="BioGRID-ORCS" id="234814">
    <property type="hits" value="1 hit in 77 CRISPR screens"/>
</dbReference>
<dbReference type="ChiTaRS" id="Mthfsd">
    <property type="organism name" value="mouse"/>
</dbReference>
<dbReference type="PRO" id="PR:Q3URQ7"/>
<dbReference type="Proteomes" id="UP000000589">
    <property type="component" value="Chromosome 8"/>
</dbReference>
<dbReference type="RNAct" id="Q3URQ7">
    <property type="molecule type" value="protein"/>
</dbReference>
<dbReference type="Bgee" id="ENSMUSG00000031816">
    <property type="expression patterns" value="Expressed in ear vesicle and 171 other cell types or tissues"/>
</dbReference>
<dbReference type="ExpressionAtlas" id="Q3URQ7">
    <property type="expression patterns" value="baseline and differential"/>
</dbReference>
<dbReference type="GO" id="GO:0003723">
    <property type="term" value="F:RNA binding"/>
    <property type="evidence" value="ECO:0007669"/>
    <property type="project" value="UniProtKB-KW"/>
</dbReference>
<dbReference type="FunFam" id="3.40.50.10420:FF:000001">
    <property type="entry name" value="Methenyltetrahydrofolate synthase domain-containing protein"/>
    <property type="match status" value="1"/>
</dbReference>
<dbReference type="FunFam" id="3.30.70.330:FF:000393">
    <property type="entry name" value="Methenyltetrahydrofolate synthetase domain containing"/>
    <property type="match status" value="1"/>
</dbReference>
<dbReference type="Gene3D" id="3.30.70.330">
    <property type="match status" value="1"/>
</dbReference>
<dbReference type="Gene3D" id="3.40.50.10420">
    <property type="entry name" value="NagB/RpiA/CoA transferase-like"/>
    <property type="match status" value="1"/>
</dbReference>
<dbReference type="InterPro" id="IPR002698">
    <property type="entry name" value="FTHF_cligase"/>
</dbReference>
<dbReference type="InterPro" id="IPR024185">
    <property type="entry name" value="FTHF_cligase-like_sf"/>
</dbReference>
<dbReference type="InterPro" id="IPR037171">
    <property type="entry name" value="NagB/RpiA_transferase-like"/>
</dbReference>
<dbReference type="InterPro" id="IPR012677">
    <property type="entry name" value="Nucleotide-bd_a/b_plait_sf"/>
</dbReference>
<dbReference type="InterPro" id="IPR035979">
    <property type="entry name" value="RBD_domain_sf"/>
</dbReference>
<dbReference type="InterPro" id="IPR000504">
    <property type="entry name" value="RRM_dom"/>
</dbReference>
<dbReference type="PANTHER" id="PTHR13017">
    <property type="entry name" value="5-FORMYLTETRAHYDROFOLATE CYCLO-LIGASE-RELATED"/>
    <property type="match status" value="1"/>
</dbReference>
<dbReference type="PANTHER" id="PTHR13017:SF0">
    <property type="entry name" value="METHENYLTETRAHYDROFOLATE SYNTHASE DOMAIN-CONTAINING PROTEIN"/>
    <property type="match status" value="1"/>
</dbReference>
<dbReference type="Pfam" id="PF01812">
    <property type="entry name" value="5-FTHF_cyc-lig"/>
    <property type="match status" value="1"/>
</dbReference>
<dbReference type="SMART" id="SM00360">
    <property type="entry name" value="RRM"/>
    <property type="match status" value="1"/>
</dbReference>
<dbReference type="SUPFAM" id="SSF100950">
    <property type="entry name" value="NagB/RpiA/CoA transferase-like"/>
    <property type="match status" value="1"/>
</dbReference>
<dbReference type="SUPFAM" id="SSF54928">
    <property type="entry name" value="RNA-binding domain, RBD"/>
    <property type="match status" value="1"/>
</dbReference>
<keyword id="KW-0025">Alternative splicing</keyword>
<keyword id="KW-1185">Reference proteome</keyword>
<keyword id="KW-0694">RNA-binding</keyword>
<protein>
    <recommendedName>
        <fullName>Methenyltetrahydrofolate synthase domain-containing protein</fullName>
    </recommendedName>
</protein>
<sequence>METQEGVSKQSIRERIWDYMESHDIADFPRPVHHRIPNFKGAAQAAGHLPHLQAFHVARTIKVNPDAPQRNARFLVLESKKTLLVPTPRLRTGLFNKITPPPGATKDILRKCATSQGVRNFSVPVGLDSSVLVDLVVVGSVAVSEKGWRIGKGEGYADLEYAMMVSMGAVHKGTPVVTIVHDCQVVDIPEALVEDHDLTVDYILTPTRVITTGCARPKPTGIMWSKVSCEMLTKIPVLRNLREREKQAGKDVTLRDEPGSQQPAPGPIRRPQDRPQTGSRGGSRSPLQGADTQLAATVCVGNLPFTTRVRELKRVLQELGVVPLRLTWQGPQHRAVLHYTDSAAAQQAASLLQGLRLGANALRVSLGQQRDM</sequence>
<feature type="chain" id="PRO_0000295872" description="Methenyltetrahydrofolate synthase domain-containing protein">
    <location>
        <begin position="1"/>
        <end position="372"/>
    </location>
</feature>
<feature type="domain" description="RRM">
    <location>
        <begin position="296"/>
        <end position="369"/>
    </location>
</feature>
<feature type="region of interest" description="Disordered" evidence="1">
    <location>
        <begin position="246"/>
        <end position="289"/>
    </location>
</feature>
<feature type="compositionally biased region" description="Basic and acidic residues" evidence="1">
    <location>
        <begin position="246"/>
        <end position="258"/>
    </location>
</feature>
<feature type="splice variant" id="VSP_027116" description="In isoform 2." evidence="3">
    <location>
        <begin position="1"/>
        <end position="19"/>
    </location>
</feature>
<feature type="splice variant" id="VSP_027117" description="In isoform 3." evidence="2">
    <original>WRIGKGEGYADLEYAMMVSMGAVHKGTPVVTIVHDCQVVDIPEALVEDHDLTVDYILTPTRVITTGCARPKPTGIMWSKVSCEMLTK</original>
    <variation>KLETGCLDVPEGYPGHSPLACVHAESLTSAPVPLTLQAFCCSVSPHGRLSVIGMGGIESLSHLNQHSVERPLPGLCGGPLMVVVIPH</variation>
    <location>
        <begin position="148"/>
        <end position="234"/>
    </location>
</feature>
<feature type="splice variant" id="VSP_027118" description="In isoform 3." evidence="2">
    <location>
        <begin position="235"/>
        <end position="372"/>
    </location>
</feature>
<accession>Q3URQ7</accession>
<accession>Q80WS4</accession>
<accession>Q8BUM0</accession>
<reference key="1">
    <citation type="journal article" date="2005" name="Science">
        <title>The transcriptional landscape of the mammalian genome.</title>
        <authorList>
            <person name="Carninci P."/>
            <person name="Kasukawa T."/>
            <person name="Katayama S."/>
            <person name="Gough J."/>
            <person name="Frith M.C."/>
            <person name="Maeda N."/>
            <person name="Oyama R."/>
            <person name="Ravasi T."/>
            <person name="Lenhard B."/>
            <person name="Wells C."/>
            <person name="Kodzius R."/>
            <person name="Shimokawa K."/>
            <person name="Bajic V.B."/>
            <person name="Brenner S.E."/>
            <person name="Batalov S."/>
            <person name="Forrest A.R."/>
            <person name="Zavolan M."/>
            <person name="Davis M.J."/>
            <person name="Wilming L.G."/>
            <person name="Aidinis V."/>
            <person name="Allen J.E."/>
            <person name="Ambesi-Impiombato A."/>
            <person name="Apweiler R."/>
            <person name="Aturaliya R.N."/>
            <person name="Bailey T.L."/>
            <person name="Bansal M."/>
            <person name="Baxter L."/>
            <person name="Beisel K.W."/>
            <person name="Bersano T."/>
            <person name="Bono H."/>
            <person name="Chalk A.M."/>
            <person name="Chiu K.P."/>
            <person name="Choudhary V."/>
            <person name="Christoffels A."/>
            <person name="Clutterbuck D.R."/>
            <person name="Crowe M.L."/>
            <person name="Dalla E."/>
            <person name="Dalrymple B.P."/>
            <person name="de Bono B."/>
            <person name="Della Gatta G."/>
            <person name="di Bernardo D."/>
            <person name="Down T."/>
            <person name="Engstrom P."/>
            <person name="Fagiolini M."/>
            <person name="Faulkner G."/>
            <person name="Fletcher C.F."/>
            <person name="Fukushima T."/>
            <person name="Furuno M."/>
            <person name="Futaki S."/>
            <person name="Gariboldi M."/>
            <person name="Georgii-Hemming P."/>
            <person name="Gingeras T.R."/>
            <person name="Gojobori T."/>
            <person name="Green R.E."/>
            <person name="Gustincich S."/>
            <person name="Harbers M."/>
            <person name="Hayashi Y."/>
            <person name="Hensch T.K."/>
            <person name="Hirokawa N."/>
            <person name="Hill D."/>
            <person name="Huminiecki L."/>
            <person name="Iacono M."/>
            <person name="Ikeo K."/>
            <person name="Iwama A."/>
            <person name="Ishikawa T."/>
            <person name="Jakt M."/>
            <person name="Kanapin A."/>
            <person name="Katoh M."/>
            <person name="Kawasawa Y."/>
            <person name="Kelso J."/>
            <person name="Kitamura H."/>
            <person name="Kitano H."/>
            <person name="Kollias G."/>
            <person name="Krishnan S.P."/>
            <person name="Kruger A."/>
            <person name="Kummerfeld S.K."/>
            <person name="Kurochkin I.V."/>
            <person name="Lareau L.F."/>
            <person name="Lazarevic D."/>
            <person name="Lipovich L."/>
            <person name="Liu J."/>
            <person name="Liuni S."/>
            <person name="McWilliam S."/>
            <person name="Madan Babu M."/>
            <person name="Madera M."/>
            <person name="Marchionni L."/>
            <person name="Matsuda H."/>
            <person name="Matsuzawa S."/>
            <person name="Miki H."/>
            <person name="Mignone F."/>
            <person name="Miyake S."/>
            <person name="Morris K."/>
            <person name="Mottagui-Tabar S."/>
            <person name="Mulder N."/>
            <person name="Nakano N."/>
            <person name="Nakauchi H."/>
            <person name="Ng P."/>
            <person name="Nilsson R."/>
            <person name="Nishiguchi S."/>
            <person name="Nishikawa S."/>
            <person name="Nori F."/>
            <person name="Ohara O."/>
            <person name="Okazaki Y."/>
            <person name="Orlando V."/>
            <person name="Pang K.C."/>
            <person name="Pavan W.J."/>
            <person name="Pavesi G."/>
            <person name="Pesole G."/>
            <person name="Petrovsky N."/>
            <person name="Piazza S."/>
            <person name="Reed J."/>
            <person name="Reid J.F."/>
            <person name="Ring B.Z."/>
            <person name="Ringwald M."/>
            <person name="Rost B."/>
            <person name="Ruan Y."/>
            <person name="Salzberg S.L."/>
            <person name="Sandelin A."/>
            <person name="Schneider C."/>
            <person name="Schoenbach C."/>
            <person name="Sekiguchi K."/>
            <person name="Semple C.A."/>
            <person name="Seno S."/>
            <person name="Sessa L."/>
            <person name="Sheng Y."/>
            <person name="Shibata Y."/>
            <person name="Shimada H."/>
            <person name="Shimada K."/>
            <person name="Silva D."/>
            <person name="Sinclair B."/>
            <person name="Sperling S."/>
            <person name="Stupka E."/>
            <person name="Sugiura K."/>
            <person name="Sultana R."/>
            <person name="Takenaka Y."/>
            <person name="Taki K."/>
            <person name="Tammoja K."/>
            <person name="Tan S.L."/>
            <person name="Tang S."/>
            <person name="Taylor M.S."/>
            <person name="Tegner J."/>
            <person name="Teichmann S.A."/>
            <person name="Ueda H.R."/>
            <person name="van Nimwegen E."/>
            <person name="Verardo R."/>
            <person name="Wei C.L."/>
            <person name="Yagi K."/>
            <person name="Yamanishi H."/>
            <person name="Zabarovsky E."/>
            <person name="Zhu S."/>
            <person name="Zimmer A."/>
            <person name="Hide W."/>
            <person name="Bult C."/>
            <person name="Grimmond S.M."/>
            <person name="Teasdale R.D."/>
            <person name="Liu E.T."/>
            <person name="Brusic V."/>
            <person name="Quackenbush J."/>
            <person name="Wahlestedt C."/>
            <person name="Mattick J.S."/>
            <person name="Hume D.A."/>
            <person name="Kai C."/>
            <person name="Sasaki D."/>
            <person name="Tomaru Y."/>
            <person name="Fukuda S."/>
            <person name="Kanamori-Katayama M."/>
            <person name="Suzuki M."/>
            <person name="Aoki J."/>
            <person name="Arakawa T."/>
            <person name="Iida J."/>
            <person name="Imamura K."/>
            <person name="Itoh M."/>
            <person name="Kato T."/>
            <person name="Kawaji H."/>
            <person name="Kawagashira N."/>
            <person name="Kawashima T."/>
            <person name="Kojima M."/>
            <person name="Kondo S."/>
            <person name="Konno H."/>
            <person name="Nakano K."/>
            <person name="Ninomiya N."/>
            <person name="Nishio T."/>
            <person name="Okada M."/>
            <person name="Plessy C."/>
            <person name="Shibata K."/>
            <person name="Shiraki T."/>
            <person name="Suzuki S."/>
            <person name="Tagami M."/>
            <person name="Waki K."/>
            <person name="Watahiki A."/>
            <person name="Okamura-Oho Y."/>
            <person name="Suzuki H."/>
            <person name="Kawai J."/>
            <person name="Hayashizaki Y."/>
        </authorList>
    </citation>
    <scope>NUCLEOTIDE SEQUENCE [LARGE SCALE MRNA] (ISOFORMS 1 AND 2)</scope>
    <source>
        <strain>C57BL/6J</strain>
        <tissue>Thymus</tissue>
    </source>
</reference>
<reference key="2">
    <citation type="journal article" date="2004" name="Genome Res.">
        <title>The status, quality, and expansion of the NIH full-length cDNA project: the Mammalian Gene Collection (MGC).</title>
        <authorList>
            <consortium name="The MGC Project Team"/>
        </authorList>
    </citation>
    <scope>NUCLEOTIDE SEQUENCE [LARGE SCALE MRNA] (ISOFORM 3)</scope>
    <source>
        <strain>C57BL/6J</strain>
        <tissue>Brain</tissue>
    </source>
</reference>
<evidence type="ECO:0000256" key="1">
    <source>
        <dbReference type="SAM" id="MobiDB-lite"/>
    </source>
</evidence>
<evidence type="ECO:0000303" key="2">
    <source>
    </source>
</evidence>
<evidence type="ECO:0000303" key="3">
    <source>
    </source>
</evidence>
<comment type="alternative products">
    <event type="alternative splicing"/>
    <isoform>
        <id>Q3URQ7-1</id>
        <name>1</name>
        <sequence type="displayed"/>
    </isoform>
    <isoform>
        <id>Q3URQ7-2</id>
        <name>2</name>
        <sequence type="described" ref="VSP_027116"/>
    </isoform>
    <isoform>
        <id>Q3URQ7-3</id>
        <name>3</name>
        <sequence type="described" ref="VSP_027117 VSP_027118"/>
    </isoform>
</comment>